<gene>
    <name evidence="1" type="primary">hcaE</name>
    <name type="ordered locus">SF2585</name>
    <name type="ordered locus">S2757</name>
</gene>
<dbReference type="EC" id="1.14.12.19" evidence="1"/>
<dbReference type="EMBL" id="AE005674">
    <property type="protein sequence ID" value="AAN44084.1"/>
    <property type="molecule type" value="Genomic_DNA"/>
</dbReference>
<dbReference type="EMBL" id="AE014073">
    <property type="protein sequence ID" value="AAP17909.1"/>
    <property type="molecule type" value="Genomic_DNA"/>
</dbReference>
<dbReference type="RefSeq" id="WP_000211158.1">
    <property type="nucleotide sequence ID" value="NZ_WPGW01000021.1"/>
</dbReference>
<dbReference type="SMR" id="Q83K39"/>
<dbReference type="STRING" id="198214.SF2585"/>
<dbReference type="PaxDb" id="198214-SF2585"/>
<dbReference type="KEGG" id="sfl:SF2585"/>
<dbReference type="KEGG" id="sfx:S2757"/>
<dbReference type="PATRIC" id="fig|198214.7.peg.3085"/>
<dbReference type="HOGENOM" id="CLU_026244_4_0_6"/>
<dbReference type="UniPathway" id="UPA00714"/>
<dbReference type="Proteomes" id="UP000001006">
    <property type="component" value="Chromosome"/>
</dbReference>
<dbReference type="Proteomes" id="UP000002673">
    <property type="component" value="Chromosome"/>
</dbReference>
<dbReference type="GO" id="GO:0051537">
    <property type="term" value="F:2 iron, 2 sulfur cluster binding"/>
    <property type="evidence" value="ECO:0007669"/>
    <property type="project" value="UniProtKB-KW"/>
</dbReference>
<dbReference type="GO" id="GO:0008695">
    <property type="term" value="F:3-phenylpropionate dioxygenase activity"/>
    <property type="evidence" value="ECO:0007669"/>
    <property type="project" value="UniProtKB-UniRule"/>
</dbReference>
<dbReference type="GO" id="GO:0005506">
    <property type="term" value="F:iron ion binding"/>
    <property type="evidence" value="ECO:0007669"/>
    <property type="project" value="UniProtKB-UniRule"/>
</dbReference>
<dbReference type="GO" id="GO:0019380">
    <property type="term" value="P:3-phenylpropionate catabolic process"/>
    <property type="evidence" value="ECO:0007669"/>
    <property type="project" value="UniProtKB-UniRule"/>
</dbReference>
<dbReference type="CDD" id="cd08881">
    <property type="entry name" value="RHO_alpha_C_NDO-like"/>
    <property type="match status" value="1"/>
</dbReference>
<dbReference type="FunFam" id="2.102.10.10:FF:000004">
    <property type="entry name" value="3-phenylpropionate/cinnamic acid dioxygenase subunit alpha"/>
    <property type="match status" value="1"/>
</dbReference>
<dbReference type="Gene3D" id="3.90.380.10">
    <property type="entry name" value="Naphthalene 1,2-dioxygenase Alpha Subunit, Chain A, domain 1"/>
    <property type="match status" value="1"/>
</dbReference>
<dbReference type="Gene3D" id="2.102.10.10">
    <property type="entry name" value="Rieske [2Fe-2S] iron-sulphur domain"/>
    <property type="match status" value="1"/>
</dbReference>
<dbReference type="HAMAP" id="MF_01648">
    <property type="entry name" value="HcaE"/>
    <property type="match status" value="1"/>
</dbReference>
<dbReference type="InterPro" id="IPR054883">
    <property type="entry name" value="3PPDioc_HcaE"/>
</dbReference>
<dbReference type="InterPro" id="IPR020875">
    <property type="entry name" value="HcaE"/>
</dbReference>
<dbReference type="InterPro" id="IPR043266">
    <property type="entry name" value="RHO_NdoB-like_C"/>
</dbReference>
<dbReference type="InterPro" id="IPR017941">
    <property type="entry name" value="Rieske_2Fe-2S"/>
</dbReference>
<dbReference type="InterPro" id="IPR036922">
    <property type="entry name" value="Rieske_2Fe-2S_sf"/>
</dbReference>
<dbReference type="InterPro" id="IPR015881">
    <property type="entry name" value="Ring-hydroxy_dOase_2Fe2S_BS"/>
</dbReference>
<dbReference type="InterPro" id="IPR015879">
    <property type="entry name" value="Ring_hydroxy_dOase_asu_C_dom"/>
</dbReference>
<dbReference type="InterPro" id="IPR001663">
    <property type="entry name" value="Rng_hydr_dOase-A"/>
</dbReference>
<dbReference type="NCBIfam" id="NF042946">
    <property type="entry name" value="3PPDioc_HcaE"/>
    <property type="match status" value="1"/>
</dbReference>
<dbReference type="PANTHER" id="PTHR43756:SF1">
    <property type="entry name" value="3-PHENYLPROPIONATE_CINNAMIC ACID DIOXYGENASE SUBUNIT ALPHA"/>
    <property type="match status" value="1"/>
</dbReference>
<dbReference type="PANTHER" id="PTHR43756">
    <property type="entry name" value="CHOLINE MONOOXYGENASE, CHLOROPLASTIC"/>
    <property type="match status" value="1"/>
</dbReference>
<dbReference type="Pfam" id="PF00355">
    <property type="entry name" value="Rieske"/>
    <property type="match status" value="1"/>
</dbReference>
<dbReference type="Pfam" id="PF00848">
    <property type="entry name" value="Ring_hydroxyl_A"/>
    <property type="match status" value="1"/>
</dbReference>
<dbReference type="PRINTS" id="PR00090">
    <property type="entry name" value="RNGDIOXGNASE"/>
</dbReference>
<dbReference type="SUPFAM" id="SSF55961">
    <property type="entry name" value="Bet v1-like"/>
    <property type="match status" value="1"/>
</dbReference>
<dbReference type="SUPFAM" id="SSF50022">
    <property type="entry name" value="ISP domain"/>
    <property type="match status" value="1"/>
</dbReference>
<dbReference type="PROSITE" id="PS51296">
    <property type="entry name" value="RIESKE"/>
    <property type="match status" value="1"/>
</dbReference>
<dbReference type="PROSITE" id="PS00570">
    <property type="entry name" value="RING_HYDROXYL_ALPHA"/>
    <property type="match status" value="1"/>
</dbReference>
<protein>
    <recommendedName>
        <fullName evidence="1">3-phenylpropionate/cinnamic acid dioxygenase subunit alpha</fullName>
        <ecNumber evidence="1">1.14.12.19</ecNumber>
    </recommendedName>
</protein>
<feature type="chain" id="PRO_0000333707" description="3-phenylpropionate/cinnamic acid dioxygenase subunit alpha">
    <location>
        <begin position="1"/>
        <end position="453"/>
    </location>
</feature>
<feature type="domain" description="Rieske" evidence="1">
    <location>
        <begin position="44"/>
        <end position="142"/>
    </location>
</feature>
<feature type="binding site" evidence="1">
    <location>
        <position position="85"/>
    </location>
    <ligand>
        <name>[2Fe-2S] cluster</name>
        <dbReference type="ChEBI" id="CHEBI:190135"/>
    </ligand>
</feature>
<feature type="binding site" evidence="1">
    <location>
        <position position="87"/>
    </location>
    <ligand>
        <name>[2Fe-2S] cluster</name>
        <dbReference type="ChEBI" id="CHEBI:190135"/>
    </ligand>
</feature>
<feature type="binding site" evidence="1">
    <location>
        <position position="105"/>
    </location>
    <ligand>
        <name>[2Fe-2S] cluster</name>
        <dbReference type="ChEBI" id="CHEBI:190135"/>
    </ligand>
</feature>
<feature type="binding site" evidence="1">
    <location>
        <position position="108"/>
    </location>
    <ligand>
        <name>[2Fe-2S] cluster</name>
        <dbReference type="ChEBI" id="CHEBI:190135"/>
    </ligand>
</feature>
<feature type="binding site" evidence="1">
    <location>
        <position position="213"/>
    </location>
    <ligand>
        <name>Fe cation</name>
        <dbReference type="ChEBI" id="CHEBI:24875"/>
    </ligand>
</feature>
<feature type="binding site" evidence="1">
    <location>
        <position position="218"/>
    </location>
    <ligand>
        <name>Fe cation</name>
        <dbReference type="ChEBI" id="CHEBI:24875"/>
    </ligand>
</feature>
<comment type="function">
    <text evidence="1">Part of the multicomponent 3-phenylpropionate dioxygenase. Converts 3-phenylpropionic acid (PP) and cinnamic acid (CI) into 3-phenylpropionate-dihydrodiol (PP-dihydrodiol) and cinnamic acid-dihydrodiol (CI-dihydrodiol), respectively.</text>
</comment>
<comment type="catalytic activity">
    <reaction evidence="1">
        <text>3-phenylpropanoate + NADH + O2 + H(+) = 3-(cis-5,6-dihydroxycyclohexa-1,3-dien-1-yl)propanoate + NAD(+)</text>
        <dbReference type="Rhea" id="RHEA:20357"/>
        <dbReference type="ChEBI" id="CHEBI:15378"/>
        <dbReference type="ChEBI" id="CHEBI:15379"/>
        <dbReference type="ChEBI" id="CHEBI:51057"/>
        <dbReference type="ChEBI" id="CHEBI:57540"/>
        <dbReference type="ChEBI" id="CHEBI:57945"/>
        <dbReference type="ChEBI" id="CHEBI:60087"/>
        <dbReference type="EC" id="1.14.12.19"/>
    </reaction>
</comment>
<comment type="catalytic activity">
    <reaction evidence="1">
        <text>(E)-cinnamate + NADH + O2 + H(+) = (2E)-3-(cis-5,6-dihydroxycyclohexa-1,3-dien-1-yl)prop-2-enoate + NAD(+)</text>
        <dbReference type="Rhea" id="RHEA:25058"/>
        <dbReference type="ChEBI" id="CHEBI:15378"/>
        <dbReference type="ChEBI" id="CHEBI:15379"/>
        <dbReference type="ChEBI" id="CHEBI:15669"/>
        <dbReference type="ChEBI" id="CHEBI:57540"/>
        <dbReference type="ChEBI" id="CHEBI:57945"/>
        <dbReference type="ChEBI" id="CHEBI:61451"/>
        <dbReference type="EC" id="1.14.12.19"/>
    </reaction>
</comment>
<comment type="cofactor">
    <cofactor evidence="1">
        <name>Fe cation</name>
        <dbReference type="ChEBI" id="CHEBI:24875"/>
    </cofactor>
    <text evidence="1">Binds 1 Fe cation.</text>
</comment>
<comment type="cofactor">
    <cofactor evidence="1">
        <name>[2Fe-2S] cluster</name>
        <dbReference type="ChEBI" id="CHEBI:190135"/>
    </cofactor>
    <text evidence="1">Binds 1 [2Fe-2S] cluster per subunit.</text>
</comment>
<comment type="pathway">
    <text evidence="1">Aromatic compound metabolism; 3-phenylpropanoate degradation.</text>
</comment>
<comment type="subunit">
    <text evidence="1">This dioxygenase system consists of four proteins: the two subunits of the hydroxylase component (HcaE and HcaF), a ferredoxin (HcaC) and a ferredoxin reductase (HcaD).</text>
</comment>
<comment type="similarity">
    <text evidence="1">Belongs to the bacterial ring-hydroxylating dioxygenase alpha subunit family.</text>
</comment>
<proteinExistence type="inferred from homology"/>
<sequence length="453" mass="51076">MTTPSDLNIYQLIDTQNGRVTPRIYTDPDIYQLELERIFGRCWLFLAHESQIPKPGDFFNTYMGEDAVVVVRQKDGSIKAFLNQCRHRAMRVSYADCGNSRAFTCPYHGWSYGINGELIDVPLEPRAYPQGLCKSHWGLNEVPCVESYKGLIFGNWDTSAPGLHDYLGDIAWYLDGMLDRREGGTEIVGGVQKWVINCNWKFPAEQFASDQYHALFSHASAVQVLGAKDDGSDKRLGDGQTARPVWETAKDALQFGQDGHGSGFFFTEKPDANVWVDGAVSSYYRETYAEAEQRLGEVRALRLAGHNNIFPTLSWLNGTATLRVWHPRGPDQVEVWAFCITDKAASDEVKAAFENSATRAFGPAGFLEQDDSENWCEIQKLLKGHRARNSKLCLEMGLGQEKRRDDGIPGITNYIFSETAARGMYQRWADLLSSESWQEVLDKTAAYQQEVMK</sequence>
<reference key="1">
    <citation type="journal article" date="2002" name="Nucleic Acids Res.">
        <title>Genome sequence of Shigella flexneri 2a: insights into pathogenicity through comparison with genomes of Escherichia coli K12 and O157.</title>
        <authorList>
            <person name="Jin Q."/>
            <person name="Yuan Z."/>
            <person name="Xu J."/>
            <person name="Wang Y."/>
            <person name="Shen Y."/>
            <person name="Lu W."/>
            <person name="Wang J."/>
            <person name="Liu H."/>
            <person name="Yang J."/>
            <person name="Yang F."/>
            <person name="Zhang X."/>
            <person name="Zhang J."/>
            <person name="Yang G."/>
            <person name="Wu H."/>
            <person name="Qu D."/>
            <person name="Dong J."/>
            <person name="Sun L."/>
            <person name="Xue Y."/>
            <person name="Zhao A."/>
            <person name="Gao Y."/>
            <person name="Zhu J."/>
            <person name="Kan B."/>
            <person name="Ding K."/>
            <person name="Chen S."/>
            <person name="Cheng H."/>
            <person name="Yao Z."/>
            <person name="He B."/>
            <person name="Chen R."/>
            <person name="Ma D."/>
            <person name="Qiang B."/>
            <person name="Wen Y."/>
            <person name="Hou Y."/>
            <person name="Yu J."/>
        </authorList>
    </citation>
    <scope>NUCLEOTIDE SEQUENCE [LARGE SCALE GENOMIC DNA]</scope>
    <source>
        <strain>301 / Serotype 2a</strain>
    </source>
</reference>
<reference key="2">
    <citation type="journal article" date="2003" name="Infect. Immun.">
        <title>Complete genome sequence and comparative genomics of Shigella flexneri serotype 2a strain 2457T.</title>
        <authorList>
            <person name="Wei J."/>
            <person name="Goldberg M.B."/>
            <person name="Burland V."/>
            <person name="Venkatesan M.M."/>
            <person name="Deng W."/>
            <person name="Fournier G."/>
            <person name="Mayhew G.F."/>
            <person name="Plunkett G. III"/>
            <person name="Rose D.J."/>
            <person name="Darling A."/>
            <person name="Mau B."/>
            <person name="Perna N.T."/>
            <person name="Payne S.M."/>
            <person name="Runyen-Janecky L.J."/>
            <person name="Zhou S."/>
            <person name="Schwartz D.C."/>
            <person name="Blattner F.R."/>
        </authorList>
    </citation>
    <scope>NUCLEOTIDE SEQUENCE [LARGE SCALE GENOMIC DNA]</scope>
    <source>
        <strain>ATCC 700930 / 2457T / Serotype 2a</strain>
    </source>
</reference>
<name>HCAE_SHIFL</name>
<evidence type="ECO:0000255" key="1">
    <source>
        <dbReference type="HAMAP-Rule" id="MF_01648"/>
    </source>
</evidence>
<keyword id="KW-0001">2Fe-2S</keyword>
<keyword id="KW-0058">Aromatic hydrocarbons catabolism</keyword>
<keyword id="KW-0223">Dioxygenase</keyword>
<keyword id="KW-0408">Iron</keyword>
<keyword id="KW-0411">Iron-sulfur</keyword>
<keyword id="KW-0479">Metal-binding</keyword>
<keyword id="KW-0520">NAD</keyword>
<keyword id="KW-0560">Oxidoreductase</keyword>
<keyword id="KW-1185">Reference proteome</keyword>
<accession>Q83K39</accession>
<accession>Q7C0G4</accession>
<organism>
    <name type="scientific">Shigella flexneri</name>
    <dbReference type="NCBI Taxonomy" id="623"/>
    <lineage>
        <taxon>Bacteria</taxon>
        <taxon>Pseudomonadati</taxon>
        <taxon>Pseudomonadota</taxon>
        <taxon>Gammaproteobacteria</taxon>
        <taxon>Enterobacterales</taxon>
        <taxon>Enterobacteriaceae</taxon>
        <taxon>Shigella</taxon>
    </lineage>
</organism>